<gene>
    <name type="primary">icmt-1</name>
    <name type="synonym">icmA</name>
    <name type="ORF">DDB_G0272799</name>
</gene>
<gene>
    <name type="primary">icmt-2</name>
    <name type="synonym">icmA</name>
    <name type="ORF">DDB_G0273995</name>
</gene>
<name>ICMT_DICDI</name>
<comment type="function">
    <text evidence="4">Methylates the C-terminal cysteine residues of small GTPases and the heterotrimeric G protein gamma subunit in response to cAMP. The methylation is required for intercellular signaling and regulation of cAMP waves propagation. It also seems to induce the activity of car1, a G protein-coupled receptor which senses extracellular cAMP during the aggregation phase of development.</text>
</comment>
<comment type="catalytic activity">
    <reaction evidence="1">
        <text>[protein]-C-terminal S-[(2E,6E)-farnesyl]-L-cysteine + S-adenosyl-L-methionine = [protein]-C-terminal S-[(2E,6E)-farnesyl]-L-cysteine methyl ester + S-adenosyl-L-homocysteine</text>
        <dbReference type="Rhea" id="RHEA:21672"/>
        <dbReference type="Rhea" id="RHEA-COMP:12125"/>
        <dbReference type="Rhea" id="RHEA-COMP:12126"/>
        <dbReference type="ChEBI" id="CHEBI:57856"/>
        <dbReference type="ChEBI" id="CHEBI:59789"/>
        <dbReference type="ChEBI" id="CHEBI:90510"/>
        <dbReference type="ChEBI" id="CHEBI:90511"/>
        <dbReference type="EC" id="2.1.1.100"/>
    </reaction>
</comment>
<comment type="subcellular location">
    <subcellularLocation>
        <location evidence="2">Endoplasmic reticulum membrane</location>
        <topology evidence="3">Multi-pass membrane protein</topology>
    </subcellularLocation>
</comment>
<comment type="developmental stage">
    <text evidence="4">Induced by starvation and expressed throughout development, with a peak at 8 hours after starvation.</text>
</comment>
<comment type="disruption phenotype">
    <text evidence="4">Cells lacking both icmt-1 and icmt-2 do not propagate cAMP waves in a sustained manner and fail to aggregate, affecting differentiation and development.</text>
</comment>
<comment type="similarity">
    <text evidence="5">Belongs to the class VI-like SAM-binding methyltransferase superfamily. Isoprenylcysteine carboxyl methyltransferase family.</text>
</comment>
<comment type="caution">
    <text evidence="5">The gene for this protein is duplicated in strains AX3 and AX4. These strains contain a duplication of a segment of 750 kb of chromosome 2 compared to the corresponding sequence in strain AX2.</text>
</comment>
<evidence type="ECO:0000250" key="1">
    <source>
        <dbReference type="UniProtKB" id="D6WJ77"/>
    </source>
</evidence>
<evidence type="ECO:0000250" key="2">
    <source>
        <dbReference type="UniProtKB" id="O60725"/>
    </source>
</evidence>
<evidence type="ECO:0000255" key="3"/>
<evidence type="ECO:0000269" key="4">
    <source>
    </source>
</evidence>
<evidence type="ECO:0000305" key="5"/>
<organism>
    <name type="scientific">Dictyostelium discoideum</name>
    <name type="common">Social amoeba</name>
    <dbReference type="NCBI Taxonomy" id="44689"/>
    <lineage>
        <taxon>Eukaryota</taxon>
        <taxon>Amoebozoa</taxon>
        <taxon>Evosea</taxon>
        <taxon>Eumycetozoa</taxon>
        <taxon>Dictyostelia</taxon>
        <taxon>Dictyosteliales</taxon>
        <taxon>Dictyosteliaceae</taxon>
        <taxon>Dictyostelium</taxon>
    </lineage>
</organism>
<dbReference type="EC" id="2.1.1.100" evidence="1"/>
<dbReference type="EMBL" id="AF487784">
    <property type="protein sequence ID" value="AAL99548.1"/>
    <property type="molecule type" value="Genomic_DNA"/>
</dbReference>
<dbReference type="EMBL" id="AAFI02000011">
    <property type="protein sequence ID" value="EAL70431.1"/>
    <property type="molecule type" value="Genomic_DNA"/>
</dbReference>
<dbReference type="EMBL" id="AAFI02000009">
    <property type="protein sequence ID" value="EAL71037.2"/>
    <property type="molecule type" value="Genomic_DNA"/>
</dbReference>
<dbReference type="SMR" id="Q558K8"/>
<dbReference type="FunCoup" id="Q558K8">
    <property type="interactions" value="358"/>
</dbReference>
<dbReference type="STRING" id="44689.Q558K8"/>
<dbReference type="PaxDb" id="44689-DDB0185114"/>
<dbReference type="EnsemblProtists" id="EAL70431">
    <property type="protein sequence ID" value="EAL70431"/>
    <property type="gene ID" value="DDB_G0273995"/>
</dbReference>
<dbReference type="EnsemblProtists" id="EAL71037">
    <property type="protein sequence ID" value="EAL71037"/>
    <property type="gene ID" value="DDB_G0272799"/>
</dbReference>
<dbReference type="KEGG" id="ddi:DDB_G0272799"/>
<dbReference type="KEGG" id="ddi:DDB_G0273995"/>
<dbReference type="dictyBase" id="DDB_G0272799">
    <property type="gene designation" value="icmA-1"/>
</dbReference>
<dbReference type="dictyBase" id="DDB_G0273995">
    <property type="gene designation" value="icmA-2"/>
</dbReference>
<dbReference type="VEuPathDB" id="AmoebaDB:DDB_G0273995"/>
<dbReference type="eggNOG" id="KOG2628">
    <property type="taxonomic scope" value="Eukaryota"/>
</dbReference>
<dbReference type="HOGENOM" id="CLU_065200_0_2_1"/>
<dbReference type="InParanoid" id="Q558K8"/>
<dbReference type="OMA" id="IKREEAY"/>
<dbReference type="PhylomeDB" id="Q558K8"/>
<dbReference type="Reactome" id="R-DDI-163841">
    <property type="pathway name" value="Gamma carboxylation, hypusinylation, hydroxylation, and arylsulfatase activation"/>
</dbReference>
<dbReference type="PRO" id="PR:Q558K8"/>
<dbReference type="Proteomes" id="UP000002195">
    <property type="component" value="Chromosome 2"/>
</dbReference>
<dbReference type="GO" id="GO:0005783">
    <property type="term" value="C:endoplasmic reticulum"/>
    <property type="evidence" value="ECO:0000318"/>
    <property type="project" value="GO_Central"/>
</dbReference>
<dbReference type="GO" id="GO:0005789">
    <property type="term" value="C:endoplasmic reticulum membrane"/>
    <property type="evidence" value="ECO:0000250"/>
    <property type="project" value="dictyBase"/>
</dbReference>
<dbReference type="GO" id="GO:0004671">
    <property type="term" value="F:protein C-terminal S-isoprenylcysteine carboxyl O-methyltransferase activity"/>
    <property type="evidence" value="ECO:0000314"/>
    <property type="project" value="dictyBase"/>
</dbReference>
<dbReference type="GO" id="GO:0030010">
    <property type="term" value="P:establishment of cell polarity"/>
    <property type="evidence" value="ECO:0000315"/>
    <property type="project" value="dictyBase"/>
</dbReference>
<dbReference type="GO" id="GO:0032259">
    <property type="term" value="P:methylation"/>
    <property type="evidence" value="ECO:0007669"/>
    <property type="project" value="UniProtKB-KW"/>
</dbReference>
<dbReference type="GO" id="GO:0006998">
    <property type="term" value="P:nuclear envelope organization"/>
    <property type="evidence" value="ECO:0000315"/>
    <property type="project" value="dictyBase"/>
</dbReference>
<dbReference type="GO" id="GO:0034504">
    <property type="term" value="P:protein localization to nucleus"/>
    <property type="evidence" value="ECO:0000315"/>
    <property type="project" value="dictyBase"/>
</dbReference>
<dbReference type="GO" id="GO:0060176">
    <property type="term" value="P:regulation of aggregation involved in sorocarp development"/>
    <property type="evidence" value="ECO:0000315"/>
    <property type="project" value="dictyBase"/>
</dbReference>
<dbReference type="GO" id="GO:0008277">
    <property type="term" value="P:regulation of G protein-coupled receptor signaling pathway"/>
    <property type="evidence" value="ECO:0000315"/>
    <property type="project" value="dictyBase"/>
</dbReference>
<dbReference type="Gene3D" id="1.20.120.1630">
    <property type="match status" value="1"/>
</dbReference>
<dbReference type="InterPro" id="IPR007269">
    <property type="entry name" value="ICMT_MeTrfase"/>
</dbReference>
<dbReference type="InterPro" id="IPR025770">
    <property type="entry name" value="PPMT_MeTrfase"/>
</dbReference>
<dbReference type="PANTHER" id="PTHR12714">
    <property type="entry name" value="PROTEIN-S ISOPRENYLCYSTEINE O-METHYLTRANSFERASE"/>
    <property type="match status" value="1"/>
</dbReference>
<dbReference type="PANTHER" id="PTHR12714:SF9">
    <property type="entry name" value="PROTEIN-S-ISOPRENYLCYSTEINE O-METHYLTRANSFERASE"/>
    <property type="match status" value="1"/>
</dbReference>
<dbReference type="Pfam" id="PF04140">
    <property type="entry name" value="ICMT"/>
    <property type="match status" value="1"/>
</dbReference>
<dbReference type="PROSITE" id="PS51564">
    <property type="entry name" value="SAM_ICMT"/>
    <property type="match status" value="1"/>
</dbReference>
<reference key="1">
    <citation type="journal article" date="2007" name="Mol. Biol. Cell">
        <title>Isoprenylcysteine carboxy methylation is essential for development in Dictyostelium discoideum.</title>
        <authorList>
            <person name="Chen Y."/>
            <person name="McQuade K.J."/>
            <person name="Guan X.-J."/>
            <person name="Thomason P.A."/>
            <person name="Wert M.S."/>
            <person name="Stock J.B."/>
            <person name="Cox E.C."/>
        </authorList>
    </citation>
    <scope>NUCLEOTIDE SEQUENCE [GENOMIC DNA]</scope>
    <scope>FUNCTION</scope>
    <scope>DEVELOPMENTAL STAGE</scope>
    <scope>DISRUPTION PHENOTYPE</scope>
</reference>
<reference key="2">
    <citation type="journal article" date="2002" name="Nature">
        <title>Sequence and analysis of chromosome 2 of Dictyostelium discoideum.</title>
        <authorList>
            <person name="Gloeckner G."/>
            <person name="Eichinger L."/>
            <person name="Szafranski K."/>
            <person name="Pachebat J.A."/>
            <person name="Bankier A.T."/>
            <person name="Dear P.H."/>
            <person name="Lehmann R."/>
            <person name="Baumgart C."/>
            <person name="Parra G."/>
            <person name="Abril J.F."/>
            <person name="Guigo R."/>
            <person name="Kumpf K."/>
            <person name="Tunggal B."/>
            <person name="Cox E.C."/>
            <person name="Quail M.A."/>
            <person name="Platzer M."/>
            <person name="Rosenthal A."/>
            <person name="Noegel A.A."/>
        </authorList>
    </citation>
    <scope>NUCLEOTIDE SEQUENCE [LARGE SCALE GENOMIC DNA]</scope>
    <source>
        <strain>AX4</strain>
    </source>
</reference>
<reference key="3">
    <citation type="journal article" date="2005" name="Nature">
        <title>The genome of the social amoeba Dictyostelium discoideum.</title>
        <authorList>
            <person name="Eichinger L."/>
            <person name="Pachebat J.A."/>
            <person name="Gloeckner G."/>
            <person name="Rajandream M.A."/>
            <person name="Sucgang R."/>
            <person name="Berriman M."/>
            <person name="Song J."/>
            <person name="Olsen R."/>
            <person name="Szafranski K."/>
            <person name="Xu Q."/>
            <person name="Tunggal B."/>
            <person name="Kummerfeld S."/>
            <person name="Madera M."/>
            <person name="Konfortov B.A."/>
            <person name="Rivero F."/>
            <person name="Bankier A.T."/>
            <person name="Lehmann R."/>
            <person name="Hamlin N."/>
            <person name="Davies R."/>
            <person name="Gaudet P."/>
            <person name="Fey P."/>
            <person name="Pilcher K."/>
            <person name="Chen G."/>
            <person name="Saunders D."/>
            <person name="Sodergren E.J."/>
            <person name="Davis P."/>
            <person name="Kerhornou A."/>
            <person name="Nie X."/>
            <person name="Hall N."/>
            <person name="Anjard C."/>
            <person name="Hemphill L."/>
            <person name="Bason N."/>
            <person name="Farbrother P."/>
            <person name="Desany B."/>
            <person name="Just E."/>
            <person name="Morio T."/>
            <person name="Rost R."/>
            <person name="Churcher C.M."/>
            <person name="Cooper J."/>
            <person name="Haydock S."/>
            <person name="van Driessche N."/>
            <person name="Cronin A."/>
            <person name="Goodhead I."/>
            <person name="Muzny D.M."/>
            <person name="Mourier T."/>
            <person name="Pain A."/>
            <person name="Lu M."/>
            <person name="Harper D."/>
            <person name="Lindsay R."/>
            <person name="Hauser H."/>
            <person name="James K.D."/>
            <person name="Quiles M."/>
            <person name="Madan Babu M."/>
            <person name="Saito T."/>
            <person name="Buchrieser C."/>
            <person name="Wardroper A."/>
            <person name="Felder M."/>
            <person name="Thangavelu M."/>
            <person name="Johnson D."/>
            <person name="Knights A."/>
            <person name="Loulseged H."/>
            <person name="Mungall K.L."/>
            <person name="Oliver K."/>
            <person name="Price C."/>
            <person name="Quail M.A."/>
            <person name="Urushihara H."/>
            <person name="Hernandez J."/>
            <person name="Rabbinowitsch E."/>
            <person name="Steffen D."/>
            <person name="Sanders M."/>
            <person name="Ma J."/>
            <person name="Kohara Y."/>
            <person name="Sharp S."/>
            <person name="Simmonds M.N."/>
            <person name="Spiegler S."/>
            <person name="Tivey A."/>
            <person name="Sugano S."/>
            <person name="White B."/>
            <person name="Walker D."/>
            <person name="Woodward J.R."/>
            <person name="Winckler T."/>
            <person name="Tanaka Y."/>
            <person name="Shaulsky G."/>
            <person name="Schleicher M."/>
            <person name="Weinstock G.M."/>
            <person name="Rosenthal A."/>
            <person name="Cox E.C."/>
            <person name="Chisholm R.L."/>
            <person name="Gibbs R.A."/>
            <person name="Loomis W.F."/>
            <person name="Platzer M."/>
            <person name="Kay R.R."/>
            <person name="Williams J.G."/>
            <person name="Dear P.H."/>
            <person name="Noegel A.A."/>
            <person name="Barrell B.G."/>
            <person name="Kuspa A."/>
        </authorList>
    </citation>
    <scope>NUCLEOTIDE SEQUENCE [LARGE SCALE GENOMIC DNA]</scope>
    <source>
        <strain>AX4</strain>
    </source>
</reference>
<keyword id="KW-0256">Endoplasmic reticulum</keyword>
<keyword id="KW-0472">Membrane</keyword>
<keyword id="KW-0489">Methyltransferase</keyword>
<keyword id="KW-1185">Reference proteome</keyword>
<keyword id="KW-0949">S-adenosyl-L-methionine</keyword>
<keyword id="KW-0808">Transferase</keyword>
<keyword id="KW-0812">Transmembrane</keyword>
<keyword id="KW-1133">Transmembrane helix</keyword>
<protein>
    <recommendedName>
        <fullName>Protein-S-isoprenylcysteine O-methyltransferase</fullName>
        <ecNumber evidence="1">2.1.1.100</ecNumber>
    </recommendedName>
    <alternativeName>
        <fullName>Isoprenylcysteine carboxylmethyltransferase</fullName>
    </alternativeName>
    <alternativeName>
        <fullName>Prenylated protein carboxyl methyltransferase</fullName>
        <shortName>PPMT</shortName>
    </alternativeName>
    <alternativeName>
        <fullName>Prenylcysteine carboxyl methyltransferase</fullName>
        <shortName>pcCMT</shortName>
    </alternativeName>
</protein>
<sequence length="237" mass="27379">MDQSEIVKLNKIKAKSAWLKKGAARSSAISCGLGIGIGFGIALFIFSQTLRGFGIYLAGLCTFHMWEYIWVTMYHPDKLSSKSFLLNHSPQFNMALLISFIEFWIEWYFFPSLKTFSLWWVGAICMVFGQIVRSVAMDTAGSNFTHLVQEEKRDDHVLVTNGIYQYMRHPSYFGWFVWSVSTQVILMNPISIIGFGWASWSFFSQRIENEEDYLIQFFGKSYKDYKKSVWSGIPGIH</sequence>
<proteinExistence type="evidence at transcript level"/>
<feature type="chain" id="PRO_0000328175" description="Protein-S-isoprenylcysteine O-methyltransferase">
    <location>
        <begin position="1"/>
        <end position="237"/>
    </location>
</feature>
<feature type="transmembrane region" description="Helical" evidence="3">
    <location>
        <begin position="26"/>
        <end position="46"/>
    </location>
</feature>
<feature type="transmembrane region" description="Helical" evidence="3">
    <location>
        <begin position="53"/>
        <end position="73"/>
    </location>
</feature>
<feature type="transmembrane region" description="Helical" evidence="3">
    <location>
        <begin position="92"/>
        <end position="112"/>
    </location>
</feature>
<feature type="transmembrane region" description="Helical" evidence="3">
    <location>
        <begin position="116"/>
        <end position="136"/>
    </location>
</feature>
<feature type="transmembrane region" description="Helical" evidence="3">
    <location>
        <begin position="184"/>
        <end position="204"/>
    </location>
</feature>
<feature type="binding site" evidence="1">
    <location>
        <position position="149"/>
    </location>
    <ligand>
        <name>S-adenosyl-L-methionine</name>
        <dbReference type="ChEBI" id="CHEBI:59789"/>
    </ligand>
</feature>
<feature type="binding site" evidence="1">
    <location>
        <begin position="156"/>
        <end position="159"/>
    </location>
    <ligand>
        <name>S-adenosyl-L-methionine</name>
        <dbReference type="ChEBI" id="CHEBI:59789"/>
    </ligand>
</feature>
<feature type="binding site" evidence="1">
    <location>
        <position position="164"/>
    </location>
    <ligand>
        <name>S-adenosyl-L-methionine</name>
        <dbReference type="ChEBI" id="CHEBI:59789"/>
    </ligand>
</feature>
<feature type="binding site" evidence="1">
    <location>
        <begin position="169"/>
        <end position="172"/>
    </location>
    <ligand>
        <name>S-adenosyl-L-methionine</name>
        <dbReference type="ChEBI" id="CHEBI:59789"/>
    </ligand>
</feature>
<feature type="binding site" evidence="1">
    <location>
        <position position="206"/>
    </location>
    <ligand>
        <name>substrate</name>
    </ligand>
</feature>
<feature type="binding site" evidence="1">
    <location>
        <position position="210"/>
    </location>
    <ligand>
        <name>S-adenosyl-L-methionine</name>
        <dbReference type="ChEBI" id="CHEBI:59789"/>
    </ligand>
</feature>
<accession>Q558K8</accession>
<accession>Q86AM7</accession>
<accession>Q8T623</accession>